<protein>
    <recommendedName>
        <fullName>Charged multivesicular body protein 2a homolog 1</fullName>
    </recommendedName>
    <alternativeName>
        <fullName>Vacuolar protein-sorting-associated protein 2A</fullName>
    </alternativeName>
</protein>
<organism>
    <name type="scientific">Dictyostelium discoideum</name>
    <name type="common">Social amoeba</name>
    <dbReference type="NCBI Taxonomy" id="44689"/>
    <lineage>
        <taxon>Eukaryota</taxon>
        <taxon>Amoebozoa</taxon>
        <taxon>Evosea</taxon>
        <taxon>Eumycetozoa</taxon>
        <taxon>Dictyostelia</taxon>
        <taxon>Dictyosteliales</taxon>
        <taxon>Dictyosteliaceae</taxon>
        <taxon>Dictyostelium</taxon>
    </lineage>
</organism>
<dbReference type="EMBL" id="AAFI02000152">
    <property type="protein sequence ID" value="EAL62404.2"/>
    <property type="molecule type" value="Genomic_DNA"/>
</dbReference>
<dbReference type="RefSeq" id="XP_635908.2">
    <property type="nucleotide sequence ID" value="XM_630816.2"/>
</dbReference>
<dbReference type="SMR" id="Q54GK9"/>
<dbReference type="FunCoup" id="Q54GK9">
    <property type="interactions" value="81"/>
</dbReference>
<dbReference type="STRING" id="44689.Q54GK9"/>
<dbReference type="PaxDb" id="44689-DDB0234032"/>
<dbReference type="EnsemblProtists" id="EAL62404">
    <property type="protein sequence ID" value="EAL62404"/>
    <property type="gene ID" value="DDB_G0290087"/>
</dbReference>
<dbReference type="GeneID" id="8627474"/>
<dbReference type="KEGG" id="ddi:DDB_G0290087"/>
<dbReference type="dictyBase" id="DDB_G0290087">
    <property type="gene designation" value="vps2A"/>
</dbReference>
<dbReference type="VEuPathDB" id="AmoebaDB:DDB_G0290087"/>
<dbReference type="eggNOG" id="KOG3230">
    <property type="taxonomic scope" value="Eukaryota"/>
</dbReference>
<dbReference type="HOGENOM" id="CLU_069208_1_2_1"/>
<dbReference type="InParanoid" id="Q54GK9"/>
<dbReference type="OMA" id="QDMFEDD"/>
<dbReference type="PhylomeDB" id="Q54GK9"/>
<dbReference type="PRO" id="PR:Q54GK9"/>
<dbReference type="Proteomes" id="UP000002195">
    <property type="component" value="Chromosome 5"/>
</dbReference>
<dbReference type="GO" id="GO:0000815">
    <property type="term" value="C:ESCRT III complex"/>
    <property type="evidence" value="ECO:0000250"/>
    <property type="project" value="dictyBase"/>
</dbReference>
<dbReference type="GO" id="GO:0005771">
    <property type="term" value="C:multivesicular body"/>
    <property type="evidence" value="ECO:0000318"/>
    <property type="project" value="GO_Central"/>
</dbReference>
<dbReference type="GO" id="GO:0032509">
    <property type="term" value="P:endosome transport via multivesicular body sorting pathway"/>
    <property type="evidence" value="ECO:0000318"/>
    <property type="project" value="GO_Central"/>
</dbReference>
<dbReference type="GO" id="GO:0045324">
    <property type="term" value="P:late endosome to vacuole transport"/>
    <property type="evidence" value="ECO:0000318"/>
    <property type="project" value="GO_Central"/>
</dbReference>
<dbReference type="GO" id="GO:0015031">
    <property type="term" value="P:protein transport"/>
    <property type="evidence" value="ECO:0000318"/>
    <property type="project" value="GO_Central"/>
</dbReference>
<dbReference type="Gene3D" id="6.10.140.1230">
    <property type="match status" value="1"/>
</dbReference>
<dbReference type="InterPro" id="IPR005024">
    <property type="entry name" value="Snf7_fam"/>
</dbReference>
<dbReference type="PANTHER" id="PTHR10476">
    <property type="entry name" value="CHARGED MULTIVESICULAR BODY PROTEIN"/>
    <property type="match status" value="1"/>
</dbReference>
<dbReference type="Pfam" id="PF03357">
    <property type="entry name" value="Snf7"/>
    <property type="match status" value="1"/>
</dbReference>
<reference key="1">
    <citation type="journal article" date="2005" name="Nature">
        <title>The genome of the social amoeba Dictyostelium discoideum.</title>
        <authorList>
            <person name="Eichinger L."/>
            <person name="Pachebat J.A."/>
            <person name="Gloeckner G."/>
            <person name="Rajandream M.A."/>
            <person name="Sucgang R."/>
            <person name="Berriman M."/>
            <person name="Song J."/>
            <person name="Olsen R."/>
            <person name="Szafranski K."/>
            <person name="Xu Q."/>
            <person name="Tunggal B."/>
            <person name="Kummerfeld S."/>
            <person name="Madera M."/>
            <person name="Konfortov B.A."/>
            <person name="Rivero F."/>
            <person name="Bankier A.T."/>
            <person name="Lehmann R."/>
            <person name="Hamlin N."/>
            <person name="Davies R."/>
            <person name="Gaudet P."/>
            <person name="Fey P."/>
            <person name="Pilcher K."/>
            <person name="Chen G."/>
            <person name="Saunders D."/>
            <person name="Sodergren E.J."/>
            <person name="Davis P."/>
            <person name="Kerhornou A."/>
            <person name="Nie X."/>
            <person name="Hall N."/>
            <person name="Anjard C."/>
            <person name="Hemphill L."/>
            <person name="Bason N."/>
            <person name="Farbrother P."/>
            <person name="Desany B."/>
            <person name="Just E."/>
            <person name="Morio T."/>
            <person name="Rost R."/>
            <person name="Churcher C.M."/>
            <person name="Cooper J."/>
            <person name="Haydock S."/>
            <person name="van Driessche N."/>
            <person name="Cronin A."/>
            <person name="Goodhead I."/>
            <person name="Muzny D.M."/>
            <person name="Mourier T."/>
            <person name="Pain A."/>
            <person name="Lu M."/>
            <person name="Harper D."/>
            <person name="Lindsay R."/>
            <person name="Hauser H."/>
            <person name="James K.D."/>
            <person name="Quiles M."/>
            <person name="Madan Babu M."/>
            <person name="Saito T."/>
            <person name="Buchrieser C."/>
            <person name="Wardroper A."/>
            <person name="Felder M."/>
            <person name="Thangavelu M."/>
            <person name="Johnson D."/>
            <person name="Knights A."/>
            <person name="Loulseged H."/>
            <person name="Mungall K.L."/>
            <person name="Oliver K."/>
            <person name="Price C."/>
            <person name="Quail M.A."/>
            <person name="Urushihara H."/>
            <person name="Hernandez J."/>
            <person name="Rabbinowitsch E."/>
            <person name="Steffen D."/>
            <person name="Sanders M."/>
            <person name="Ma J."/>
            <person name="Kohara Y."/>
            <person name="Sharp S."/>
            <person name="Simmonds M.N."/>
            <person name="Spiegler S."/>
            <person name="Tivey A."/>
            <person name="Sugano S."/>
            <person name="White B."/>
            <person name="Walker D."/>
            <person name="Woodward J.R."/>
            <person name="Winckler T."/>
            <person name="Tanaka Y."/>
            <person name="Shaulsky G."/>
            <person name="Schleicher M."/>
            <person name="Weinstock G.M."/>
            <person name="Rosenthal A."/>
            <person name="Cox E.C."/>
            <person name="Chisholm R.L."/>
            <person name="Gibbs R.A."/>
            <person name="Loomis W.F."/>
            <person name="Platzer M."/>
            <person name="Kay R.R."/>
            <person name="Williams J.G."/>
            <person name="Dear P.H."/>
            <person name="Noegel A.A."/>
            <person name="Barrell B.G."/>
            <person name="Kuspa A."/>
        </authorList>
    </citation>
    <scope>NUCLEOTIDE SEQUENCE [LARGE SCALE GENOMIC DNA]</scope>
    <source>
        <strain>AX4</strain>
    </source>
</reference>
<gene>
    <name type="primary">chmp2a1</name>
    <name type="synonym">vps2A</name>
    <name type="ORF">DDB_G0290087</name>
</gene>
<accession>Q54GK9</accession>
<evidence type="ECO:0000250" key="1"/>
<evidence type="ECO:0000255" key="2"/>
<evidence type="ECO:0000256" key="3">
    <source>
        <dbReference type="SAM" id="MobiDB-lite"/>
    </source>
</evidence>
<evidence type="ECO:0000305" key="4"/>
<comment type="function">
    <text evidence="1">Probable core component of the endosomal sorting required for transport complex III (ESCRT-III) which is involved in multivesicular bodies (MVBs) formation and sorting of endosomal cargo proteins into MVBs. MVBs contain intraluminal vesicles (ILVs) that are generated by invagination and scission from the limiting membrane of the endosome and are delivered to lysosomes enabling degradation of membrane proteins (By similarity).</text>
</comment>
<comment type="subunit">
    <text evidence="1">Probable core component of the endosomal sorting required for transport complex III (ESCRT-III). ESCRT-III components are thought to multimerize to form a flat lattice on the perimeter membrane of the endosome (By similarity).</text>
</comment>
<comment type="subcellular location">
    <subcellularLocation>
        <location evidence="1">Endosome membrane</location>
        <topology evidence="1">Peripheral membrane protein</topology>
        <orientation evidence="1">Cytoplasmic side</orientation>
    </subcellularLocation>
</comment>
<comment type="similarity">
    <text evidence="4">Belongs to the SNF7 family.</text>
</comment>
<feature type="chain" id="PRO_0000328591" description="Charged multivesicular body protein 2a homolog 1">
    <location>
        <begin position="1"/>
        <end position="206"/>
    </location>
</feature>
<feature type="region of interest" description="Disordered" evidence="3">
    <location>
        <begin position="1"/>
        <end position="32"/>
    </location>
</feature>
<feature type="coiled-coil region" evidence="2">
    <location>
        <begin position="12"/>
        <end position="80"/>
    </location>
</feature>
<feature type="coiled-coil region" evidence="2">
    <location>
        <begin position="114"/>
        <end position="148"/>
    </location>
</feature>
<feature type="compositionally biased region" description="Basic and acidic residues" evidence="3">
    <location>
        <begin position="9"/>
        <end position="32"/>
    </location>
</feature>
<name>CM2A1_DICDI</name>
<sequence>MSFFGGNKKTPEQELKDSKRELSKGQREMDRELNRLKIVEQEYIGKIKQLAKAGRNDEAKRMANDLVKLRGQMERMRATKTTLSAVSTKTTTIKANQTMANAMASATKAMSTMNKQTDLVQLQKTMMEYEKQTQRVEMTEEMMQDMFEDDEVDEEADDILSKVVDEVCLDNYQKMPSVAQKDLPYSSKTSTFKTEDEELNKLLQSL</sequence>
<keyword id="KW-0175">Coiled coil</keyword>
<keyword id="KW-0967">Endosome</keyword>
<keyword id="KW-0472">Membrane</keyword>
<keyword id="KW-0653">Protein transport</keyword>
<keyword id="KW-1185">Reference proteome</keyword>
<keyword id="KW-0813">Transport</keyword>
<proteinExistence type="inferred from homology"/>